<keyword id="KW-0002">3D-structure</keyword>
<keyword id="KW-0238">DNA-binding</keyword>
<keyword id="KW-1185">Reference proteome</keyword>
<keyword id="KW-0678">Repressor</keyword>
<keyword id="KW-0804">Transcription</keyword>
<keyword id="KW-0805">Transcription regulation</keyword>
<feature type="chain" id="PRO_0000070635" description="HTH-type transcriptional regulator RutR">
    <location>
        <begin position="1"/>
        <end position="212"/>
    </location>
</feature>
<feature type="domain" description="HTH tetR-type" evidence="1">
    <location>
        <begin position="17"/>
        <end position="77"/>
    </location>
</feature>
<feature type="DNA-binding region" description="H-T-H motif" evidence="1">
    <location>
        <begin position="39"/>
        <end position="58"/>
    </location>
</feature>
<feature type="helix" evidence="6">
    <location>
        <begin position="14"/>
        <end position="34"/>
    </location>
</feature>
<feature type="turn" evidence="6">
    <location>
        <begin position="36"/>
        <end position="38"/>
    </location>
</feature>
<feature type="helix" evidence="6">
    <location>
        <begin position="41"/>
        <end position="48"/>
    </location>
</feature>
<feature type="helix" evidence="6">
    <location>
        <begin position="52"/>
        <end position="58"/>
    </location>
</feature>
<feature type="strand" evidence="5">
    <location>
        <begin position="59"/>
        <end position="61"/>
    </location>
</feature>
<feature type="helix" evidence="6">
    <location>
        <begin position="62"/>
        <end position="82"/>
    </location>
</feature>
<feature type="helix" evidence="6">
    <location>
        <begin position="90"/>
        <end position="107"/>
    </location>
</feature>
<feature type="helix" evidence="6">
    <location>
        <begin position="109"/>
        <end position="120"/>
    </location>
</feature>
<feature type="turn" evidence="6">
    <location>
        <begin position="124"/>
        <end position="126"/>
    </location>
</feature>
<feature type="helix" evidence="6">
    <location>
        <begin position="127"/>
        <end position="131"/>
    </location>
</feature>
<feature type="helix" evidence="6">
    <location>
        <begin position="133"/>
        <end position="150"/>
    </location>
</feature>
<feature type="helix" evidence="6">
    <location>
        <begin position="159"/>
        <end position="175"/>
    </location>
</feature>
<feature type="helix" evidence="6">
    <location>
        <begin position="177"/>
        <end position="184"/>
    </location>
</feature>
<feature type="helix" evidence="6">
    <location>
        <begin position="191"/>
        <end position="209"/>
    </location>
</feature>
<gene>
    <name type="primary">rutR</name>
    <name type="synonym">ycdC</name>
    <name type="ordered locus">b1013</name>
    <name type="ordered locus">JW0998</name>
</gene>
<sequence>MTQGAVKTTGKRSRAVSAKKKAILSAALDTFSQFGFHGTRLEQIAELAGVSKTNLLYYFPSKEALYIAVLRQILDIWLAPLKAFREDFAPLAAIKEYIRLKLEVSRDYPQASRLFCMEMLAGAPLLMDELTGDLKALIDEKSALIAGWVKSGKLAPIDPQHLIFMIWASTQHYADFAPQVEAVTGATLRDEVFFNQTVENVQRIIIEGIRPR</sequence>
<evidence type="ECO:0000255" key="1">
    <source>
        <dbReference type="PROSITE-ProRule" id="PRU00335"/>
    </source>
</evidence>
<evidence type="ECO:0000269" key="2">
    <source>
    </source>
</evidence>
<evidence type="ECO:0000269" key="3">
    <source>
    </source>
</evidence>
<evidence type="ECO:0000269" key="4">
    <source ref="6"/>
</evidence>
<evidence type="ECO:0007829" key="5">
    <source>
        <dbReference type="PDB" id="3LOC"/>
    </source>
</evidence>
<evidence type="ECO:0007829" key="6">
    <source>
        <dbReference type="PDB" id="4JYK"/>
    </source>
</evidence>
<name>RUTR_ECOLI</name>
<reference key="1">
    <citation type="journal article" date="1996" name="DNA Res.">
        <title>A 718-kb DNA sequence of the Escherichia coli K-12 genome corresponding to the 12.7-28.0 min region on the linkage map.</title>
        <authorList>
            <person name="Oshima T."/>
            <person name="Aiba H."/>
            <person name="Baba T."/>
            <person name="Fujita K."/>
            <person name="Hayashi K."/>
            <person name="Honjo A."/>
            <person name="Ikemoto K."/>
            <person name="Inada T."/>
            <person name="Itoh T."/>
            <person name="Kajihara M."/>
            <person name="Kanai K."/>
            <person name="Kashimoto K."/>
            <person name="Kimura S."/>
            <person name="Kitagawa M."/>
            <person name="Makino K."/>
            <person name="Masuda S."/>
            <person name="Miki T."/>
            <person name="Mizobuchi K."/>
            <person name="Mori H."/>
            <person name="Motomura K."/>
            <person name="Nakamura Y."/>
            <person name="Nashimoto H."/>
            <person name="Nishio Y."/>
            <person name="Saito N."/>
            <person name="Sampei G."/>
            <person name="Seki Y."/>
            <person name="Tagami H."/>
            <person name="Takemoto K."/>
            <person name="Wada C."/>
            <person name="Yamamoto Y."/>
            <person name="Yano M."/>
            <person name="Horiuchi T."/>
        </authorList>
    </citation>
    <scope>NUCLEOTIDE SEQUENCE [LARGE SCALE GENOMIC DNA]</scope>
    <source>
        <strain>K12 / W3110 / ATCC 27325 / DSM 5911</strain>
    </source>
</reference>
<reference key="2">
    <citation type="journal article" date="1997" name="Science">
        <title>The complete genome sequence of Escherichia coli K-12.</title>
        <authorList>
            <person name="Blattner F.R."/>
            <person name="Plunkett G. III"/>
            <person name="Bloch C.A."/>
            <person name="Perna N.T."/>
            <person name="Burland V."/>
            <person name="Riley M."/>
            <person name="Collado-Vides J."/>
            <person name="Glasner J.D."/>
            <person name="Rode C.K."/>
            <person name="Mayhew G.F."/>
            <person name="Gregor J."/>
            <person name="Davis N.W."/>
            <person name="Kirkpatrick H.A."/>
            <person name="Goeden M.A."/>
            <person name="Rose D.J."/>
            <person name="Mau B."/>
            <person name="Shao Y."/>
        </authorList>
    </citation>
    <scope>NUCLEOTIDE SEQUENCE [LARGE SCALE GENOMIC DNA]</scope>
    <source>
        <strain>K12 / MG1655 / ATCC 47076</strain>
    </source>
</reference>
<reference key="3">
    <citation type="journal article" date="2006" name="Mol. Syst. Biol.">
        <title>Highly accurate genome sequences of Escherichia coli K-12 strains MG1655 and W3110.</title>
        <authorList>
            <person name="Hayashi K."/>
            <person name="Morooka N."/>
            <person name="Yamamoto Y."/>
            <person name="Fujita K."/>
            <person name="Isono K."/>
            <person name="Choi S."/>
            <person name="Ohtsubo E."/>
            <person name="Baba T."/>
            <person name="Wanner B.L."/>
            <person name="Mori H."/>
            <person name="Horiuchi T."/>
        </authorList>
    </citation>
    <scope>NUCLEOTIDE SEQUENCE [LARGE SCALE GENOMIC DNA]</scope>
    <source>
        <strain>K12 / W3110 / ATCC 27325 / DSM 5911</strain>
    </source>
</reference>
<reference key="4">
    <citation type="journal article" date="2006" name="Proc. Natl. Acad. Sci. U.S.A.">
        <title>A previously undescribed pathway for pyrimidine catabolism.</title>
        <authorList>
            <person name="Loh K.D."/>
            <person name="Gyaneshwar P."/>
            <person name="Markenscoff Papadimitriou E."/>
            <person name="Fong R."/>
            <person name="Kim K.-S."/>
            <person name="Parales R."/>
            <person name="Zhou Z."/>
            <person name="Inwood W."/>
            <person name="Kustu S."/>
        </authorList>
    </citation>
    <scope>FUNCTION IN PYRIMIDINE CATABOLISM</scope>
    <scope>NOMENCLATURE</scope>
    <source>
        <strain>K12 / MG1655 / ATCC 47076</strain>
    </source>
</reference>
<reference key="5">
    <citation type="journal article" date="2007" name="Mol. Microbiol.">
        <title>RutR is the uracil/thymine-sensing master regulator of a set of genes for synthesis and degradation of pyrimidines.</title>
        <authorList>
            <person name="Shimada T."/>
            <person name="Hirao K."/>
            <person name="Kori A."/>
            <person name="Yamamoto K."/>
            <person name="Ishihama A."/>
        </authorList>
    </citation>
    <scope>FUNCTION AS A TRANSCRIPTIONAL REGULATOR</scope>
</reference>
<reference key="6">
    <citation type="submission" date="2003-05" db="PDB data bank">
        <title>Crystal structure of hypothetical transcriptional regulator ycdC from Escherichia coli.</title>
        <authorList>
            <consortium name="New York structural genomics research consortium (NYSGRC)"/>
        </authorList>
    </citation>
    <scope>X-RAY CRYSTALLOGRAPHY (2.5 ANGSTROMS)</scope>
    <scope>SUBUNIT</scope>
</reference>
<comment type="function">
    <text evidence="2 3">Master transcription regulator which represses the degradation of pyrimidines (rutABCDEFG) and purines (gcl operon) for maintenance of metabolic balance between pyrimidines and purines. It also regulates the synthesis of pyrimidine nucleotides and arginine from glutamine (carAB) and the supply of glutamate (gadABWX).</text>
</comment>
<comment type="subunit">
    <text evidence="4">Homodimer.</text>
</comment>
<comment type="interaction">
    <interactant intactId="EBI-1121539">
        <id>P0ACU2</id>
    </interactant>
    <interactant intactId="EBI-544810">
        <id>P04951</id>
        <label>kdsB</label>
    </interactant>
    <organismsDiffer>false</organismsDiffer>
    <experiments>2</experiments>
</comment>
<comment type="miscellaneous">
    <text>The Rut pathway degrades exogenous pyrimidines as the sole nitrogen source at room temperature but not at 37 degrees Celsius, a restriction that is apparently a consequence of an inadequate ability to remove toxic malonic semialdehyde at the higher temperature (RutE/YdfG function).</text>
</comment>
<dbReference type="EMBL" id="U00096">
    <property type="protein sequence ID" value="AAC74098.1"/>
    <property type="molecule type" value="Genomic_DNA"/>
</dbReference>
<dbReference type="EMBL" id="AP009048">
    <property type="protein sequence ID" value="BAA35790.1"/>
    <property type="molecule type" value="Genomic_DNA"/>
</dbReference>
<dbReference type="PIR" id="C64843">
    <property type="entry name" value="C64843"/>
</dbReference>
<dbReference type="RefSeq" id="NP_415533.1">
    <property type="nucleotide sequence ID" value="NC_000913.3"/>
</dbReference>
<dbReference type="RefSeq" id="WP_000191701.1">
    <property type="nucleotide sequence ID" value="NZ_SSZK01000002.1"/>
</dbReference>
<dbReference type="PDB" id="3LOC">
    <property type="method" value="X-ray"/>
    <property type="resolution" value="2.50 A"/>
    <property type="chains" value="A/B/C/D=1-212"/>
</dbReference>
<dbReference type="PDB" id="4JYK">
    <property type="method" value="X-ray"/>
    <property type="resolution" value="1.70 A"/>
    <property type="chains" value="A/B=1-212"/>
</dbReference>
<dbReference type="PDB" id="4X1E">
    <property type="method" value="X-ray"/>
    <property type="resolution" value="2.40 A"/>
    <property type="chains" value="A/B=1-212"/>
</dbReference>
<dbReference type="PDB" id="4XK4">
    <property type="method" value="X-ray"/>
    <property type="resolution" value="2.27 A"/>
    <property type="chains" value="A/B/C/D=1-212"/>
</dbReference>
<dbReference type="PDB" id="6Z1B">
    <property type="method" value="X-ray"/>
    <property type="resolution" value="2.25 A"/>
    <property type="chains" value="A/B=1-212"/>
</dbReference>
<dbReference type="PDBsum" id="3LOC"/>
<dbReference type="PDBsum" id="4JYK"/>
<dbReference type="PDBsum" id="4X1E"/>
<dbReference type="PDBsum" id="4XK4"/>
<dbReference type="PDBsum" id="6Z1B"/>
<dbReference type="SMR" id="P0ACU2"/>
<dbReference type="BioGRID" id="4259692">
    <property type="interactions" value="96"/>
</dbReference>
<dbReference type="BioGRID" id="849464">
    <property type="interactions" value="5"/>
</dbReference>
<dbReference type="FunCoup" id="P0ACU2">
    <property type="interactions" value="253"/>
</dbReference>
<dbReference type="IntAct" id="P0ACU2">
    <property type="interactions" value="23"/>
</dbReference>
<dbReference type="STRING" id="511145.b1013"/>
<dbReference type="jPOST" id="P0ACU2"/>
<dbReference type="PaxDb" id="511145-b1013"/>
<dbReference type="DNASU" id="945075"/>
<dbReference type="EnsemblBacteria" id="AAC74098">
    <property type="protein sequence ID" value="AAC74098"/>
    <property type="gene ID" value="b1013"/>
</dbReference>
<dbReference type="GeneID" id="75171089"/>
<dbReference type="GeneID" id="945075"/>
<dbReference type="KEGG" id="ecj:JW0998"/>
<dbReference type="KEGG" id="eco:b1013"/>
<dbReference type="KEGG" id="ecoc:C3026_06160"/>
<dbReference type="PATRIC" id="fig|1411691.4.peg.1258"/>
<dbReference type="EchoBASE" id="EB2207"/>
<dbReference type="eggNOG" id="COG1309">
    <property type="taxonomic scope" value="Bacteria"/>
</dbReference>
<dbReference type="HOGENOM" id="CLU_069356_1_0_6"/>
<dbReference type="InParanoid" id="P0ACU2"/>
<dbReference type="OMA" id="DPHHLIF"/>
<dbReference type="OrthoDB" id="6860332at2"/>
<dbReference type="PhylomeDB" id="P0ACU2"/>
<dbReference type="BioCyc" id="EcoCyc:PD01352"/>
<dbReference type="EvolutionaryTrace" id="P0ACU2"/>
<dbReference type="PRO" id="PR:P0ACU2"/>
<dbReference type="Proteomes" id="UP000000625">
    <property type="component" value="Chromosome"/>
</dbReference>
<dbReference type="CollecTF" id="EXPREG_00000870"/>
<dbReference type="GO" id="GO:0003700">
    <property type="term" value="F:DNA-binding transcription factor activity"/>
    <property type="evidence" value="ECO:0000314"/>
    <property type="project" value="EcoCyc"/>
</dbReference>
<dbReference type="GO" id="GO:0000976">
    <property type="term" value="F:transcription cis-regulatory region binding"/>
    <property type="evidence" value="ECO:0000318"/>
    <property type="project" value="GO_Central"/>
</dbReference>
<dbReference type="GO" id="GO:0045892">
    <property type="term" value="P:negative regulation of DNA-templated transcription"/>
    <property type="evidence" value="ECO:0000314"/>
    <property type="project" value="UniProtKB"/>
</dbReference>
<dbReference type="GO" id="GO:0045893">
    <property type="term" value="P:positive regulation of DNA-templated transcription"/>
    <property type="evidence" value="ECO:0000314"/>
    <property type="project" value="UniProtKB"/>
</dbReference>
<dbReference type="GO" id="GO:0006355">
    <property type="term" value="P:regulation of DNA-templated transcription"/>
    <property type="evidence" value="ECO:0000318"/>
    <property type="project" value="GO_Central"/>
</dbReference>
<dbReference type="FunFam" id="1.10.357.10:FF:000010">
    <property type="entry name" value="HTH-type transcriptional regulator RutR"/>
    <property type="match status" value="1"/>
</dbReference>
<dbReference type="Gene3D" id="1.10.10.60">
    <property type="entry name" value="Homeodomain-like"/>
    <property type="match status" value="1"/>
</dbReference>
<dbReference type="Gene3D" id="1.10.357.10">
    <property type="entry name" value="Tetracycline Repressor, domain 2"/>
    <property type="match status" value="1"/>
</dbReference>
<dbReference type="InterPro" id="IPR009057">
    <property type="entry name" value="Homeodomain-like_sf"/>
</dbReference>
<dbReference type="InterPro" id="IPR050109">
    <property type="entry name" value="HTH-type_TetR-like_transc_reg"/>
</dbReference>
<dbReference type="InterPro" id="IPR001647">
    <property type="entry name" value="HTH_TetR"/>
</dbReference>
<dbReference type="InterPro" id="IPR036271">
    <property type="entry name" value="Tet_transcr_reg_TetR-rel_C_sf"/>
</dbReference>
<dbReference type="InterPro" id="IPR019915">
    <property type="entry name" value="Tscrpt_reg_pyr_util_RutR"/>
</dbReference>
<dbReference type="InterPro" id="IPR013573">
    <property type="entry name" value="Tscrpt_reg_YcdC_C"/>
</dbReference>
<dbReference type="NCBIfam" id="NF011584">
    <property type="entry name" value="PRK15008.1"/>
    <property type="match status" value="1"/>
</dbReference>
<dbReference type="NCBIfam" id="TIGR03613">
    <property type="entry name" value="RutR"/>
    <property type="match status" value="1"/>
</dbReference>
<dbReference type="PANTHER" id="PTHR30055">
    <property type="entry name" value="HTH-TYPE TRANSCRIPTIONAL REGULATOR RUTR"/>
    <property type="match status" value="1"/>
</dbReference>
<dbReference type="PANTHER" id="PTHR30055:SF196">
    <property type="entry name" value="HTH-TYPE TRANSCRIPTIONAL REGULATOR RUTR"/>
    <property type="match status" value="1"/>
</dbReference>
<dbReference type="Pfam" id="PF08362">
    <property type="entry name" value="TetR_C_3"/>
    <property type="match status" value="1"/>
</dbReference>
<dbReference type="Pfam" id="PF00440">
    <property type="entry name" value="TetR_N"/>
    <property type="match status" value="1"/>
</dbReference>
<dbReference type="PRINTS" id="PR00455">
    <property type="entry name" value="HTHTETR"/>
</dbReference>
<dbReference type="SUPFAM" id="SSF46689">
    <property type="entry name" value="Homeodomain-like"/>
    <property type="match status" value="1"/>
</dbReference>
<dbReference type="SUPFAM" id="SSF48498">
    <property type="entry name" value="Tetracyclin repressor-like, C-terminal domain"/>
    <property type="match status" value="1"/>
</dbReference>
<dbReference type="PROSITE" id="PS50977">
    <property type="entry name" value="HTH_TETR_2"/>
    <property type="match status" value="1"/>
</dbReference>
<proteinExistence type="evidence at protein level"/>
<accession>P0ACU2</accession>
<accession>P75899</accession>
<protein>
    <recommendedName>
        <fullName>HTH-type transcriptional regulator RutR</fullName>
    </recommendedName>
    <alternativeName>
        <fullName>Rut operon repressor</fullName>
    </alternativeName>
</protein>
<organism>
    <name type="scientific">Escherichia coli (strain K12)</name>
    <dbReference type="NCBI Taxonomy" id="83333"/>
    <lineage>
        <taxon>Bacteria</taxon>
        <taxon>Pseudomonadati</taxon>
        <taxon>Pseudomonadota</taxon>
        <taxon>Gammaproteobacteria</taxon>
        <taxon>Enterobacterales</taxon>
        <taxon>Enterobacteriaceae</taxon>
        <taxon>Escherichia</taxon>
    </lineage>
</organism>